<feature type="chain" id="PRO_1000146231" description="Adenine deaminase">
    <location>
        <begin position="1"/>
        <end position="569"/>
    </location>
</feature>
<organism>
    <name type="scientific">Desulfatibacillum aliphaticivorans</name>
    <dbReference type="NCBI Taxonomy" id="218208"/>
    <lineage>
        <taxon>Bacteria</taxon>
        <taxon>Pseudomonadati</taxon>
        <taxon>Thermodesulfobacteriota</taxon>
        <taxon>Desulfobacteria</taxon>
        <taxon>Desulfobacterales</taxon>
        <taxon>Desulfatibacillaceae</taxon>
        <taxon>Desulfatibacillum</taxon>
    </lineage>
</organism>
<sequence length="569" mass="60194">MIDDQVIAAARGDIPCDLVLKNAQIVNVFSGEIQKGDVAVQGGKVAALDSRDAKITVDLEGRFLTPGLIDAHVHIESSMVSPYQYARTVILHGTTAVIADPHEIANVMGVDGVSYMIQAAEGAPVGIFYAVPSCVPATHLETAGASLETKDILPFLEHPKIVGLAEMMNFPGVIYRDPEVLAKMNAAKSHRKTVDGHAPGLSGADLQAYLAAGAASDHECTTPEEALEKLASGMRIMIRQGTGAKNLNDLLPIVTEQNSRRIMFCSDDRHPYDLLEKGHINIMVARSIRQGVDPVTAIRMASLNTAEYFGLRDRGGIAPGMRADLLVVPDLVDFHVQDVYSGGVKVVEDGCGLPSPMDPPPRPQTSSMNVDVDGLDFTIKAGSGKARIIKLIPDQVVTAAMTGDVLQKNGEALSDPGNDILKIAVVERHKGTGNIGLGFVNGFGLQKGALASSVAHDSHNIIVVGVDDADMKAAVKAVADMGGGLAAAAGGKALSVCPLPIAGLMSDQPMEQVRRQLDILMQTAKELGAKAEDPFMSLSFLALPVIPELKITDKGLVDVNLFNFVSLFE</sequence>
<name>ADEC_DESAL</name>
<dbReference type="EC" id="3.5.4.2" evidence="1"/>
<dbReference type="EMBL" id="CP001322">
    <property type="protein sequence ID" value="ACL05443.1"/>
    <property type="molecule type" value="Genomic_DNA"/>
</dbReference>
<dbReference type="RefSeq" id="WP_015948494.1">
    <property type="nucleotide sequence ID" value="NC_011768.1"/>
</dbReference>
<dbReference type="SMR" id="B8FLT9"/>
<dbReference type="KEGG" id="dal:Dalk_3756"/>
<dbReference type="eggNOG" id="COG1001">
    <property type="taxonomic scope" value="Bacteria"/>
</dbReference>
<dbReference type="HOGENOM" id="CLU_027935_0_0_7"/>
<dbReference type="Proteomes" id="UP000000739">
    <property type="component" value="Chromosome"/>
</dbReference>
<dbReference type="GO" id="GO:0000034">
    <property type="term" value="F:adenine deaminase activity"/>
    <property type="evidence" value="ECO:0007669"/>
    <property type="project" value="UniProtKB-UniRule"/>
</dbReference>
<dbReference type="GO" id="GO:0006146">
    <property type="term" value="P:adenine catabolic process"/>
    <property type="evidence" value="ECO:0007669"/>
    <property type="project" value="InterPro"/>
</dbReference>
<dbReference type="CDD" id="cd01295">
    <property type="entry name" value="AdeC"/>
    <property type="match status" value="1"/>
</dbReference>
<dbReference type="FunFam" id="3.20.20.140:FF:000016">
    <property type="entry name" value="Adenine deaminase"/>
    <property type="match status" value="1"/>
</dbReference>
<dbReference type="Gene3D" id="3.20.20.140">
    <property type="entry name" value="Metal-dependent hydrolases"/>
    <property type="match status" value="1"/>
</dbReference>
<dbReference type="Gene3D" id="2.30.40.10">
    <property type="entry name" value="Urease, subunit C, domain 1"/>
    <property type="match status" value="1"/>
</dbReference>
<dbReference type="HAMAP" id="MF_01518">
    <property type="entry name" value="Adenine_deamin"/>
    <property type="match status" value="1"/>
</dbReference>
<dbReference type="InterPro" id="IPR006679">
    <property type="entry name" value="Adenine_deam"/>
</dbReference>
<dbReference type="InterPro" id="IPR026912">
    <property type="entry name" value="Adenine_deam_C"/>
</dbReference>
<dbReference type="InterPro" id="IPR006680">
    <property type="entry name" value="Amidohydro-rel"/>
</dbReference>
<dbReference type="InterPro" id="IPR011059">
    <property type="entry name" value="Metal-dep_hydrolase_composite"/>
</dbReference>
<dbReference type="InterPro" id="IPR032466">
    <property type="entry name" value="Metal_Hydrolase"/>
</dbReference>
<dbReference type="NCBIfam" id="TIGR01178">
    <property type="entry name" value="ade"/>
    <property type="match status" value="1"/>
</dbReference>
<dbReference type="PANTHER" id="PTHR11113:SF2">
    <property type="entry name" value="ADENINE DEAMINASE"/>
    <property type="match status" value="1"/>
</dbReference>
<dbReference type="PANTHER" id="PTHR11113">
    <property type="entry name" value="N-ACETYLGLUCOSAMINE-6-PHOSPHATE DEACETYLASE"/>
    <property type="match status" value="1"/>
</dbReference>
<dbReference type="Pfam" id="PF13382">
    <property type="entry name" value="Adenine_deam_C"/>
    <property type="match status" value="1"/>
</dbReference>
<dbReference type="Pfam" id="PF01979">
    <property type="entry name" value="Amidohydro_1"/>
    <property type="match status" value="1"/>
</dbReference>
<dbReference type="SUPFAM" id="SSF51338">
    <property type="entry name" value="Composite domain of metallo-dependent hydrolases"/>
    <property type="match status" value="1"/>
</dbReference>
<dbReference type="SUPFAM" id="SSF51556">
    <property type="entry name" value="Metallo-dependent hydrolases"/>
    <property type="match status" value="1"/>
</dbReference>
<reference key="1">
    <citation type="journal article" date="2012" name="Environ. Microbiol.">
        <title>The genome sequence of Desulfatibacillum alkenivorans AK-01: a blueprint for anaerobic alkane oxidation.</title>
        <authorList>
            <person name="Callaghan A.V."/>
            <person name="Morris B.E."/>
            <person name="Pereira I.A."/>
            <person name="McInerney M.J."/>
            <person name="Austin R.N."/>
            <person name="Groves J.T."/>
            <person name="Kukor J.J."/>
            <person name="Suflita J.M."/>
            <person name="Young L.Y."/>
            <person name="Zylstra G.J."/>
            <person name="Wawrik B."/>
        </authorList>
    </citation>
    <scope>NUCLEOTIDE SEQUENCE [LARGE SCALE GENOMIC DNA]</scope>
    <source>
        <strain>AK-01</strain>
    </source>
</reference>
<keyword id="KW-0378">Hydrolase</keyword>
<keyword id="KW-0464">Manganese</keyword>
<keyword id="KW-1185">Reference proteome</keyword>
<proteinExistence type="inferred from homology"/>
<protein>
    <recommendedName>
        <fullName evidence="1">Adenine deaminase</fullName>
        <shortName evidence="1">Adenase</shortName>
        <shortName evidence="1">Adenine aminase</shortName>
        <ecNumber evidence="1">3.5.4.2</ecNumber>
    </recommendedName>
</protein>
<comment type="catalytic activity">
    <reaction evidence="1">
        <text>adenine + H2O + H(+) = hypoxanthine + NH4(+)</text>
        <dbReference type="Rhea" id="RHEA:23688"/>
        <dbReference type="ChEBI" id="CHEBI:15377"/>
        <dbReference type="ChEBI" id="CHEBI:15378"/>
        <dbReference type="ChEBI" id="CHEBI:16708"/>
        <dbReference type="ChEBI" id="CHEBI:17368"/>
        <dbReference type="ChEBI" id="CHEBI:28938"/>
        <dbReference type="EC" id="3.5.4.2"/>
    </reaction>
</comment>
<comment type="cofactor">
    <cofactor evidence="1">
        <name>Mn(2+)</name>
        <dbReference type="ChEBI" id="CHEBI:29035"/>
    </cofactor>
</comment>
<comment type="similarity">
    <text evidence="1">Belongs to the metallo-dependent hydrolases superfamily. Adenine deaminase family.</text>
</comment>
<accession>B8FLT9</accession>
<gene>
    <name evidence="1" type="primary">ade</name>
    <name type="ordered locus">Dalk_3756</name>
</gene>
<evidence type="ECO:0000255" key="1">
    <source>
        <dbReference type="HAMAP-Rule" id="MF_01518"/>
    </source>
</evidence>